<gene>
    <name evidence="1" type="primary">ispDF</name>
    <name type="ordered locus">Ccur92_13190</name>
    <name type="ORF">CCV52592_0202</name>
</gene>
<accession>A7GZI1</accession>
<sequence>MLDISLIMLGAGNSSRFELPVKKQWLRIGSDPLWLAATKNLSEFYTFKDIIVVSKECEYMARFAPHYKFVTGGDTRQQSLKNALNLVSSQFVLVSDIARPCITHELFSKIIEGSKQANCVVPALKIADTAYFGDEVIDRDKIKLIQTPQLSKTNLLKQALETDTLYTDDSSAMRAVGASVWHVLGDERAHKITTKSDLAKIPCLIPPSNEHFTGIGFDAHEFERGRELWLCGEKIEYEFGLKAHSDGDVALHALTDAILGAAGLGDIGELFPDTDAEFKGISSLLLLQEAYKKVQSVGFELVNADITIMAERPKISKFKRKMEANIAGALNLAPNRINVKATTTEKLGFVGRGEGIAVIASANLKYYDWTK</sequence>
<organism>
    <name type="scientific">Campylobacter curvus (strain 525.92)</name>
    <dbReference type="NCBI Taxonomy" id="360105"/>
    <lineage>
        <taxon>Bacteria</taxon>
        <taxon>Pseudomonadati</taxon>
        <taxon>Campylobacterota</taxon>
        <taxon>Epsilonproteobacteria</taxon>
        <taxon>Campylobacterales</taxon>
        <taxon>Campylobacteraceae</taxon>
        <taxon>Campylobacter</taxon>
    </lineage>
</organism>
<reference key="1">
    <citation type="submission" date="2007-07" db="EMBL/GenBank/DDBJ databases">
        <title>Genome sequence of Campylobacter curvus 525.92 isolated from human feces.</title>
        <authorList>
            <person name="Fouts D.E."/>
            <person name="Mongodin E.F."/>
            <person name="Puiu D."/>
            <person name="Sebastian Y."/>
            <person name="Miller W.G."/>
            <person name="Mandrell R.E."/>
            <person name="Lastovica A.J."/>
            <person name="Nelson K.E."/>
        </authorList>
    </citation>
    <scope>NUCLEOTIDE SEQUENCE [LARGE SCALE GENOMIC DNA]</scope>
    <source>
        <strain>525.92</strain>
    </source>
</reference>
<dbReference type="EC" id="2.7.7.60" evidence="1"/>
<dbReference type="EC" id="4.6.1.12" evidence="1"/>
<dbReference type="EMBL" id="CP000767">
    <property type="protein sequence ID" value="EAU01256.1"/>
    <property type="molecule type" value="Genomic_DNA"/>
</dbReference>
<dbReference type="RefSeq" id="WP_011992507.1">
    <property type="nucleotide sequence ID" value="NC_009715.2"/>
</dbReference>
<dbReference type="SMR" id="A7GZI1"/>
<dbReference type="STRING" id="360105.CCV52592_0202"/>
<dbReference type="KEGG" id="ccv:CCV52592_0202"/>
<dbReference type="HOGENOM" id="CLU_042800_2_6_7"/>
<dbReference type="OrthoDB" id="9804336at2"/>
<dbReference type="UniPathway" id="UPA00056">
    <property type="reaction ID" value="UER00093"/>
</dbReference>
<dbReference type="UniPathway" id="UPA00056">
    <property type="reaction ID" value="UER00095"/>
</dbReference>
<dbReference type="Proteomes" id="UP000006380">
    <property type="component" value="Chromosome"/>
</dbReference>
<dbReference type="GO" id="GO:0008685">
    <property type="term" value="F:2-C-methyl-D-erythritol 2,4-cyclodiphosphate synthase activity"/>
    <property type="evidence" value="ECO:0007669"/>
    <property type="project" value="UniProtKB-UniRule"/>
</dbReference>
<dbReference type="GO" id="GO:0050518">
    <property type="term" value="F:2-C-methyl-D-erythritol 4-phosphate cytidylyltransferase activity"/>
    <property type="evidence" value="ECO:0007669"/>
    <property type="project" value="UniProtKB-UniRule"/>
</dbReference>
<dbReference type="GO" id="GO:0046872">
    <property type="term" value="F:metal ion binding"/>
    <property type="evidence" value="ECO:0007669"/>
    <property type="project" value="UniProtKB-KW"/>
</dbReference>
<dbReference type="GO" id="GO:0019288">
    <property type="term" value="P:isopentenyl diphosphate biosynthetic process, methylerythritol 4-phosphate pathway"/>
    <property type="evidence" value="ECO:0007669"/>
    <property type="project" value="UniProtKB-UniRule"/>
</dbReference>
<dbReference type="GO" id="GO:0016114">
    <property type="term" value="P:terpenoid biosynthetic process"/>
    <property type="evidence" value="ECO:0007669"/>
    <property type="project" value="InterPro"/>
</dbReference>
<dbReference type="CDD" id="cd02516">
    <property type="entry name" value="CDP-ME_synthetase"/>
    <property type="match status" value="1"/>
</dbReference>
<dbReference type="CDD" id="cd00554">
    <property type="entry name" value="MECDP_synthase"/>
    <property type="match status" value="1"/>
</dbReference>
<dbReference type="FunFam" id="3.30.1330.50:FF:000003">
    <property type="entry name" value="2-C-methyl-D-erythritol 2,4-cyclodiphosphate synthase"/>
    <property type="match status" value="1"/>
</dbReference>
<dbReference type="Gene3D" id="3.30.1330.50">
    <property type="entry name" value="2-C-methyl-D-erythritol 2,4-cyclodiphosphate synthase"/>
    <property type="match status" value="1"/>
</dbReference>
<dbReference type="Gene3D" id="3.90.550.10">
    <property type="entry name" value="Spore Coat Polysaccharide Biosynthesis Protein SpsA, Chain A"/>
    <property type="match status" value="1"/>
</dbReference>
<dbReference type="HAMAP" id="MF_01520">
    <property type="entry name" value="IspDF"/>
    <property type="match status" value="1"/>
</dbReference>
<dbReference type="HAMAP" id="MF_00107">
    <property type="entry name" value="IspF"/>
    <property type="match status" value="1"/>
</dbReference>
<dbReference type="InterPro" id="IPR001228">
    <property type="entry name" value="IspD"/>
</dbReference>
<dbReference type="InterPro" id="IPR026596">
    <property type="entry name" value="IspD/F"/>
</dbReference>
<dbReference type="InterPro" id="IPR034683">
    <property type="entry name" value="IspD/TarI"/>
</dbReference>
<dbReference type="InterPro" id="IPR003526">
    <property type="entry name" value="MECDP_synthase"/>
</dbReference>
<dbReference type="InterPro" id="IPR020555">
    <property type="entry name" value="MECDP_synthase_CS"/>
</dbReference>
<dbReference type="InterPro" id="IPR036571">
    <property type="entry name" value="MECDP_synthase_sf"/>
</dbReference>
<dbReference type="InterPro" id="IPR029044">
    <property type="entry name" value="Nucleotide-diphossugar_trans"/>
</dbReference>
<dbReference type="NCBIfam" id="TIGR00453">
    <property type="entry name" value="ispD"/>
    <property type="match status" value="1"/>
</dbReference>
<dbReference type="NCBIfam" id="TIGR00151">
    <property type="entry name" value="ispF"/>
    <property type="match status" value="1"/>
</dbReference>
<dbReference type="NCBIfam" id="NF006899">
    <property type="entry name" value="PRK09382.1"/>
    <property type="match status" value="1"/>
</dbReference>
<dbReference type="PANTHER" id="PTHR43181">
    <property type="entry name" value="2-C-METHYL-D-ERYTHRITOL 2,4-CYCLODIPHOSPHATE SYNTHASE, CHLOROPLASTIC"/>
    <property type="match status" value="1"/>
</dbReference>
<dbReference type="PANTHER" id="PTHR43181:SF1">
    <property type="entry name" value="2-C-METHYL-D-ERYTHRITOL 2,4-CYCLODIPHOSPHATE SYNTHASE, CHLOROPLASTIC"/>
    <property type="match status" value="1"/>
</dbReference>
<dbReference type="Pfam" id="PF01128">
    <property type="entry name" value="IspD"/>
    <property type="match status" value="1"/>
</dbReference>
<dbReference type="Pfam" id="PF02542">
    <property type="entry name" value="YgbB"/>
    <property type="match status" value="1"/>
</dbReference>
<dbReference type="SUPFAM" id="SSF69765">
    <property type="entry name" value="IpsF-like"/>
    <property type="match status" value="1"/>
</dbReference>
<dbReference type="SUPFAM" id="SSF53448">
    <property type="entry name" value="Nucleotide-diphospho-sugar transferases"/>
    <property type="match status" value="1"/>
</dbReference>
<dbReference type="PROSITE" id="PS01350">
    <property type="entry name" value="ISPF"/>
    <property type="match status" value="1"/>
</dbReference>
<feature type="chain" id="PRO_0000315551" description="Bifunctional enzyme IspD/IspF">
    <location>
        <begin position="1"/>
        <end position="371"/>
    </location>
</feature>
<feature type="region of interest" description="2-C-methyl-D-erythritol 4-phosphate cytidylyltransferase" evidence="1">
    <location>
        <begin position="1"/>
        <end position="212"/>
    </location>
</feature>
<feature type="region of interest" description="2-C-methyl-D-erythritol 2,4-cyclodiphosphate synthase" evidence="1">
    <location>
        <begin position="212"/>
        <end position="371"/>
    </location>
</feature>
<feature type="binding site" evidence="1">
    <location>
        <begin position="218"/>
        <end position="220"/>
    </location>
    <ligand>
        <name>4-CDP-2-C-methyl-D-erythritol 2-phosphate</name>
        <dbReference type="ChEBI" id="CHEBI:57919"/>
    </ligand>
</feature>
<feature type="binding site" evidence="1">
    <location>
        <position position="218"/>
    </location>
    <ligand>
        <name>a divalent metal cation</name>
        <dbReference type="ChEBI" id="CHEBI:60240"/>
    </ligand>
</feature>
<feature type="binding site" evidence="1">
    <location>
        <position position="220"/>
    </location>
    <ligand>
        <name>a divalent metal cation</name>
        <dbReference type="ChEBI" id="CHEBI:60240"/>
    </ligand>
</feature>
<feature type="binding site" evidence="1">
    <location>
        <begin position="244"/>
        <end position="245"/>
    </location>
    <ligand>
        <name>4-CDP-2-C-methyl-D-erythritol 2-phosphate</name>
        <dbReference type="ChEBI" id="CHEBI:57919"/>
    </ligand>
</feature>
<feature type="binding site" evidence="1">
    <location>
        <position position="252"/>
    </location>
    <ligand>
        <name>a divalent metal cation</name>
        <dbReference type="ChEBI" id="CHEBI:60240"/>
    </ligand>
</feature>
<feature type="binding site" evidence="1">
    <location>
        <begin position="266"/>
        <end position="268"/>
    </location>
    <ligand>
        <name>4-CDP-2-C-methyl-D-erythritol 2-phosphate</name>
        <dbReference type="ChEBI" id="CHEBI:57919"/>
    </ligand>
</feature>
<feature type="binding site" evidence="1">
    <location>
        <begin position="271"/>
        <end position="275"/>
    </location>
    <ligand>
        <name>4-CDP-2-C-methyl-D-erythritol 2-phosphate</name>
        <dbReference type="ChEBI" id="CHEBI:57919"/>
    </ligand>
</feature>
<feature type="binding site" evidence="1">
    <location>
        <begin position="342"/>
        <end position="345"/>
    </location>
    <ligand>
        <name>4-CDP-2-C-methyl-D-erythritol 2-phosphate</name>
        <dbReference type="ChEBI" id="CHEBI:57919"/>
    </ligand>
</feature>
<feature type="binding site" evidence="1">
    <location>
        <position position="349"/>
    </location>
    <ligand>
        <name>4-CDP-2-C-methyl-D-erythritol 2-phosphate</name>
        <dbReference type="ChEBI" id="CHEBI:57919"/>
    </ligand>
</feature>
<feature type="binding site" evidence="1">
    <location>
        <position position="352"/>
    </location>
    <ligand>
        <name>4-CDP-2-C-methyl-D-erythritol 2-phosphate</name>
        <dbReference type="ChEBI" id="CHEBI:57919"/>
    </ligand>
</feature>
<feature type="site" description="Transition state stabilizer" evidence="1">
    <location>
        <position position="16"/>
    </location>
</feature>
<feature type="site" description="Transition state stabilizer" evidence="1">
    <location>
        <position position="23"/>
    </location>
</feature>
<feature type="site" description="Positions MEP for the nucleophilic attack" evidence="1">
    <location>
        <position position="139"/>
    </location>
</feature>
<feature type="site" description="Positions MEP for the nucleophilic attack" evidence="1">
    <location>
        <position position="191"/>
    </location>
</feature>
<feature type="site" description="Transition state stabilizer" evidence="1">
    <location>
        <position position="244"/>
    </location>
</feature>
<feature type="site" description="Transition state stabilizer" evidence="1">
    <location>
        <position position="343"/>
    </location>
</feature>
<proteinExistence type="inferred from homology"/>
<protein>
    <recommendedName>
        <fullName evidence="1">Bifunctional enzyme IspD/IspF</fullName>
    </recommendedName>
    <domain>
        <recommendedName>
            <fullName evidence="1">2-C-methyl-D-erythritol 4-phosphate cytidylyltransferase</fullName>
            <ecNumber evidence="1">2.7.7.60</ecNumber>
        </recommendedName>
        <alternativeName>
            <fullName evidence="1">4-diphosphocytidyl-2C-methyl-D-erythritol synthase</fullName>
        </alternativeName>
        <alternativeName>
            <fullName evidence="1">MEP cytidylyltransferase</fullName>
            <shortName evidence="1">MCT</shortName>
        </alternativeName>
    </domain>
    <domain>
        <recommendedName>
            <fullName evidence="1">2-C-methyl-D-erythritol 2,4-cyclodiphosphate synthase</fullName>
            <shortName evidence="1">MECDP-synthase</shortName>
            <shortName evidence="1">MECPP-synthase</shortName>
            <shortName evidence="1">MECPS</shortName>
            <ecNumber evidence="1">4.6.1.12</ecNumber>
        </recommendedName>
    </domain>
</protein>
<evidence type="ECO:0000255" key="1">
    <source>
        <dbReference type="HAMAP-Rule" id="MF_01520"/>
    </source>
</evidence>
<keyword id="KW-0414">Isoprene biosynthesis</keyword>
<keyword id="KW-0456">Lyase</keyword>
<keyword id="KW-0479">Metal-binding</keyword>
<keyword id="KW-0511">Multifunctional enzyme</keyword>
<keyword id="KW-0548">Nucleotidyltransferase</keyword>
<keyword id="KW-1185">Reference proteome</keyword>
<keyword id="KW-0808">Transferase</keyword>
<name>ISPDF_CAMC5</name>
<comment type="function">
    <text evidence="1">Bifunctional enzyme that catalyzes the formation of 4-diphosphocytidyl-2-C-methyl-D-erythritol from CTP and 2-C-methyl-D-erythritol 4-phosphate (MEP) (IspD), and catalyzes the conversion of 4-diphosphocytidyl-2-C-methyl-D-erythritol 2-phosphate (CDP-ME2P) to 2-C-methyl-D-erythritol 2,4-cyclodiphosphate (ME-CPP) with a corresponding release of cytidine 5-monophosphate (CMP) (IspF).</text>
</comment>
<comment type="catalytic activity">
    <reaction evidence="1">
        <text>2-C-methyl-D-erythritol 4-phosphate + CTP + H(+) = 4-CDP-2-C-methyl-D-erythritol + diphosphate</text>
        <dbReference type="Rhea" id="RHEA:13429"/>
        <dbReference type="ChEBI" id="CHEBI:15378"/>
        <dbReference type="ChEBI" id="CHEBI:33019"/>
        <dbReference type="ChEBI" id="CHEBI:37563"/>
        <dbReference type="ChEBI" id="CHEBI:57823"/>
        <dbReference type="ChEBI" id="CHEBI:58262"/>
        <dbReference type="EC" id="2.7.7.60"/>
    </reaction>
</comment>
<comment type="catalytic activity">
    <reaction evidence="1">
        <text>4-CDP-2-C-methyl-D-erythritol 2-phosphate = 2-C-methyl-D-erythritol 2,4-cyclic diphosphate + CMP</text>
        <dbReference type="Rhea" id="RHEA:23864"/>
        <dbReference type="ChEBI" id="CHEBI:57919"/>
        <dbReference type="ChEBI" id="CHEBI:58483"/>
        <dbReference type="ChEBI" id="CHEBI:60377"/>
        <dbReference type="EC" id="4.6.1.12"/>
    </reaction>
</comment>
<comment type="cofactor">
    <cofactor evidence="1">
        <name>a divalent metal cation</name>
        <dbReference type="ChEBI" id="CHEBI:60240"/>
    </cofactor>
</comment>
<comment type="pathway">
    <text evidence="1">Isoprenoid biosynthesis; isopentenyl diphosphate biosynthesis via DXP pathway; isopentenyl diphosphate from 1-deoxy-D-xylulose 5-phosphate: step 2/6.</text>
</comment>
<comment type="pathway">
    <text evidence="1">Isoprenoid biosynthesis; isopentenyl diphosphate biosynthesis via DXP pathway; isopentenyl diphosphate from 1-deoxy-D-xylulose 5-phosphate: step 4/6.</text>
</comment>
<comment type="similarity">
    <text evidence="1">In the N-terminal section; belongs to the IspD/TarI cytidylyltransferase family. IspD subfamily.</text>
</comment>
<comment type="similarity">
    <text evidence="1">In the C-terminal section; belongs to the IspF family.</text>
</comment>